<reference key="1">
    <citation type="journal article" date="2008" name="BMC Genomics">
        <title>Comparative genomic analysis of the gut bacterium Bifidobacterium longum reveals loci susceptible to deletion during pure culture growth.</title>
        <authorList>
            <person name="Lee J.H."/>
            <person name="Karamychev V.N."/>
            <person name="Kozyavkin S.A."/>
            <person name="Mills D."/>
            <person name="Pavlov A.R."/>
            <person name="Pavlova N.V."/>
            <person name="Polouchine N.N."/>
            <person name="Richardson P.M."/>
            <person name="Shakhova V.V."/>
            <person name="Slesarev A.I."/>
            <person name="Weimer B."/>
            <person name="O'Sullivan D.J."/>
        </authorList>
    </citation>
    <scope>NUCLEOTIDE SEQUENCE [LARGE SCALE GENOMIC DNA]</scope>
    <source>
        <strain>DJO10A</strain>
    </source>
</reference>
<name>ENO_BIFLD</name>
<evidence type="ECO:0000255" key="1">
    <source>
        <dbReference type="HAMAP-Rule" id="MF_00318"/>
    </source>
</evidence>
<gene>
    <name evidence="1" type="primary">eno</name>
    <name type="ordered locus">BLD_0775</name>
</gene>
<dbReference type="EC" id="4.2.1.11" evidence="1"/>
<dbReference type="EMBL" id="CP000605">
    <property type="protein sequence ID" value="ACD98221.1"/>
    <property type="molecule type" value="Genomic_DNA"/>
</dbReference>
<dbReference type="RefSeq" id="WP_007051126.1">
    <property type="nucleotide sequence ID" value="NZ_AABM02000002.1"/>
</dbReference>
<dbReference type="SMR" id="B3DSV2"/>
<dbReference type="GeneID" id="69577835"/>
<dbReference type="KEGG" id="blj:BLD_0775"/>
<dbReference type="HOGENOM" id="CLU_031223_2_1_11"/>
<dbReference type="UniPathway" id="UPA00109">
    <property type="reaction ID" value="UER00187"/>
</dbReference>
<dbReference type="Proteomes" id="UP000002419">
    <property type="component" value="Chromosome"/>
</dbReference>
<dbReference type="GO" id="GO:0009986">
    <property type="term" value="C:cell surface"/>
    <property type="evidence" value="ECO:0007669"/>
    <property type="project" value="UniProtKB-SubCell"/>
</dbReference>
<dbReference type="GO" id="GO:0005576">
    <property type="term" value="C:extracellular region"/>
    <property type="evidence" value="ECO:0007669"/>
    <property type="project" value="UniProtKB-SubCell"/>
</dbReference>
<dbReference type="GO" id="GO:0000015">
    <property type="term" value="C:phosphopyruvate hydratase complex"/>
    <property type="evidence" value="ECO:0007669"/>
    <property type="project" value="InterPro"/>
</dbReference>
<dbReference type="GO" id="GO:0000287">
    <property type="term" value="F:magnesium ion binding"/>
    <property type="evidence" value="ECO:0007669"/>
    <property type="project" value="UniProtKB-UniRule"/>
</dbReference>
<dbReference type="GO" id="GO:0004634">
    <property type="term" value="F:phosphopyruvate hydratase activity"/>
    <property type="evidence" value="ECO:0007669"/>
    <property type="project" value="UniProtKB-UniRule"/>
</dbReference>
<dbReference type="GO" id="GO:0006096">
    <property type="term" value="P:glycolytic process"/>
    <property type="evidence" value="ECO:0007669"/>
    <property type="project" value="UniProtKB-UniRule"/>
</dbReference>
<dbReference type="CDD" id="cd03313">
    <property type="entry name" value="enolase"/>
    <property type="match status" value="1"/>
</dbReference>
<dbReference type="FunFam" id="3.20.20.120:FF:000001">
    <property type="entry name" value="Enolase"/>
    <property type="match status" value="1"/>
</dbReference>
<dbReference type="FunFam" id="3.30.390.10:FF:000001">
    <property type="entry name" value="Enolase"/>
    <property type="match status" value="1"/>
</dbReference>
<dbReference type="Gene3D" id="3.20.20.120">
    <property type="entry name" value="Enolase-like C-terminal domain"/>
    <property type="match status" value="1"/>
</dbReference>
<dbReference type="Gene3D" id="3.30.390.10">
    <property type="entry name" value="Enolase-like, N-terminal domain"/>
    <property type="match status" value="1"/>
</dbReference>
<dbReference type="HAMAP" id="MF_00318">
    <property type="entry name" value="Enolase"/>
    <property type="match status" value="1"/>
</dbReference>
<dbReference type="InterPro" id="IPR000941">
    <property type="entry name" value="Enolase"/>
</dbReference>
<dbReference type="InterPro" id="IPR036849">
    <property type="entry name" value="Enolase-like_C_sf"/>
</dbReference>
<dbReference type="InterPro" id="IPR029017">
    <property type="entry name" value="Enolase-like_N"/>
</dbReference>
<dbReference type="InterPro" id="IPR020810">
    <property type="entry name" value="Enolase_C"/>
</dbReference>
<dbReference type="InterPro" id="IPR020809">
    <property type="entry name" value="Enolase_CS"/>
</dbReference>
<dbReference type="InterPro" id="IPR020811">
    <property type="entry name" value="Enolase_N"/>
</dbReference>
<dbReference type="NCBIfam" id="TIGR01060">
    <property type="entry name" value="eno"/>
    <property type="match status" value="1"/>
</dbReference>
<dbReference type="PANTHER" id="PTHR11902">
    <property type="entry name" value="ENOLASE"/>
    <property type="match status" value="1"/>
</dbReference>
<dbReference type="PANTHER" id="PTHR11902:SF1">
    <property type="entry name" value="ENOLASE"/>
    <property type="match status" value="1"/>
</dbReference>
<dbReference type="Pfam" id="PF00113">
    <property type="entry name" value="Enolase_C"/>
    <property type="match status" value="1"/>
</dbReference>
<dbReference type="Pfam" id="PF03952">
    <property type="entry name" value="Enolase_N"/>
    <property type="match status" value="1"/>
</dbReference>
<dbReference type="PIRSF" id="PIRSF001400">
    <property type="entry name" value="Enolase"/>
    <property type="match status" value="1"/>
</dbReference>
<dbReference type="PRINTS" id="PR00148">
    <property type="entry name" value="ENOLASE"/>
</dbReference>
<dbReference type="SFLD" id="SFLDF00002">
    <property type="entry name" value="enolase"/>
    <property type="match status" value="1"/>
</dbReference>
<dbReference type="SFLD" id="SFLDG00178">
    <property type="entry name" value="enolase"/>
    <property type="match status" value="1"/>
</dbReference>
<dbReference type="SMART" id="SM01192">
    <property type="entry name" value="Enolase_C"/>
    <property type="match status" value="1"/>
</dbReference>
<dbReference type="SMART" id="SM01193">
    <property type="entry name" value="Enolase_N"/>
    <property type="match status" value="1"/>
</dbReference>
<dbReference type="SUPFAM" id="SSF51604">
    <property type="entry name" value="Enolase C-terminal domain-like"/>
    <property type="match status" value="1"/>
</dbReference>
<dbReference type="SUPFAM" id="SSF54826">
    <property type="entry name" value="Enolase N-terminal domain-like"/>
    <property type="match status" value="1"/>
</dbReference>
<dbReference type="PROSITE" id="PS00164">
    <property type="entry name" value="ENOLASE"/>
    <property type="match status" value="1"/>
</dbReference>
<sequence>MAVIESVYARQILDSRGNPTVQVVLDTEDGAQGLGLVPSGASTGEAEAWERRDGDKSVYGGKGVLNAVKAVNEVIAPKVIGMDAADQRALDDLMIELDGTPNKGKLGANAILGVSLAALYASAESAGLPLYRYIGGTNGHILPVPNMNIMNGGAHADFATDIQEYMISPYGFDTYSEALRAGVEVYHTLKNVLKKEGLNTGLGDEGGFAPKMKSNEDSLKYIMDAISAAGYEPGKQIGICLDVASSEFYNKETGKYRFDGEERDSAYMLDYYENLINEYPIVSIEDPFNEEGWEDWAAITARLGDRLQFVGDDLLVTNPARLQKAIDLGAANSLLVKLNQIGSVTETLDAIELATANGYTSMVSHRSGETPDTTISDLAVAKNTRQIKTGAPARGERVAKYNRLLEIEEELGSTAQYAGYSAFKACKKYLAK</sequence>
<feature type="chain" id="PRO_1000115830" description="Enolase">
    <location>
        <begin position="1"/>
        <end position="432"/>
    </location>
</feature>
<feature type="active site" description="Proton donor" evidence="1">
    <location>
        <position position="205"/>
    </location>
</feature>
<feature type="active site" description="Proton acceptor" evidence="1">
    <location>
        <position position="337"/>
    </location>
</feature>
<feature type="binding site" evidence="1">
    <location>
        <position position="163"/>
    </location>
    <ligand>
        <name>(2R)-2-phosphoglycerate</name>
        <dbReference type="ChEBI" id="CHEBI:58289"/>
    </ligand>
</feature>
<feature type="binding site" evidence="1">
    <location>
        <position position="242"/>
    </location>
    <ligand>
        <name>Mg(2+)</name>
        <dbReference type="ChEBI" id="CHEBI:18420"/>
    </ligand>
</feature>
<feature type="binding site" evidence="1">
    <location>
        <position position="285"/>
    </location>
    <ligand>
        <name>Mg(2+)</name>
        <dbReference type="ChEBI" id="CHEBI:18420"/>
    </ligand>
</feature>
<feature type="binding site" evidence="1">
    <location>
        <position position="312"/>
    </location>
    <ligand>
        <name>Mg(2+)</name>
        <dbReference type="ChEBI" id="CHEBI:18420"/>
    </ligand>
</feature>
<feature type="binding site" evidence="1">
    <location>
        <position position="337"/>
    </location>
    <ligand>
        <name>(2R)-2-phosphoglycerate</name>
        <dbReference type="ChEBI" id="CHEBI:58289"/>
    </ligand>
</feature>
<feature type="binding site" evidence="1">
    <location>
        <position position="366"/>
    </location>
    <ligand>
        <name>(2R)-2-phosphoglycerate</name>
        <dbReference type="ChEBI" id="CHEBI:58289"/>
    </ligand>
</feature>
<feature type="binding site" evidence="1">
    <location>
        <position position="367"/>
    </location>
    <ligand>
        <name>(2R)-2-phosphoglycerate</name>
        <dbReference type="ChEBI" id="CHEBI:58289"/>
    </ligand>
</feature>
<feature type="binding site" evidence="1">
    <location>
        <position position="388"/>
    </location>
    <ligand>
        <name>(2R)-2-phosphoglycerate</name>
        <dbReference type="ChEBI" id="CHEBI:58289"/>
    </ligand>
</feature>
<organism>
    <name type="scientific">Bifidobacterium longum (strain DJO10A)</name>
    <dbReference type="NCBI Taxonomy" id="205913"/>
    <lineage>
        <taxon>Bacteria</taxon>
        <taxon>Bacillati</taxon>
        <taxon>Actinomycetota</taxon>
        <taxon>Actinomycetes</taxon>
        <taxon>Bifidobacteriales</taxon>
        <taxon>Bifidobacteriaceae</taxon>
        <taxon>Bifidobacterium</taxon>
    </lineage>
</organism>
<keyword id="KW-0963">Cytoplasm</keyword>
<keyword id="KW-0324">Glycolysis</keyword>
<keyword id="KW-0456">Lyase</keyword>
<keyword id="KW-0460">Magnesium</keyword>
<keyword id="KW-0479">Metal-binding</keyword>
<keyword id="KW-0964">Secreted</keyword>
<protein>
    <recommendedName>
        <fullName evidence="1">Enolase</fullName>
        <ecNumber evidence="1">4.2.1.11</ecNumber>
    </recommendedName>
    <alternativeName>
        <fullName evidence="1">2-phospho-D-glycerate hydro-lyase</fullName>
    </alternativeName>
    <alternativeName>
        <fullName evidence="1">2-phosphoglycerate dehydratase</fullName>
    </alternativeName>
</protein>
<comment type="function">
    <text evidence="1">Catalyzes the reversible conversion of 2-phosphoglycerate (2-PG) into phosphoenolpyruvate (PEP). It is essential for the degradation of carbohydrates via glycolysis.</text>
</comment>
<comment type="catalytic activity">
    <reaction evidence="1">
        <text>(2R)-2-phosphoglycerate = phosphoenolpyruvate + H2O</text>
        <dbReference type="Rhea" id="RHEA:10164"/>
        <dbReference type="ChEBI" id="CHEBI:15377"/>
        <dbReference type="ChEBI" id="CHEBI:58289"/>
        <dbReference type="ChEBI" id="CHEBI:58702"/>
        <dbReference type="EC" id="4.2.1.11"/>
    </reaction>
</comment>
<comment type="cofactor">
    <cofactor evidence="1">
        <name>Mg(2+)</name>
        <dbReference type="ChEBI" id="CHEBI:18420"/>
    </cofactor>
    <text evidence="1">Binds a second Mg(2+) ion via substrate during catalysis.</text>
</comment>
<comment type="pathway">
    <text evidence="1">Carbohydrate degradation; glycolysis; pyruvate from D-glyceraldehyde 3-phosphate: step 4/5.</text>
</comment>
<comment type="subcellular location">
    <subcellularLocation>
        <location evidence="1">Cytoplasm</location>
    </subcellularLocation>
    <subcellularLocation>
        <location evidence="1">Secreted</location>
    </subcellularLocation>
    <subcellularLocation>
        <location evidence="1">Cell surface</location>
    </subcellularLocation>
    <text evidence="1">Fractions of enolase are present in both the cytoplasm and on the cell surface.</text>
</comment>
<comment type="similarity">
    <text evidence="1">Belongs to the enolase family.</text>
</comment>
<proteinExistence type="inferred from homology"/>
<accession>B3DSV2</accession>